<evidence type="ECO:0000250" key="1">
    <source>
        <dbReference type="UniProtKB" id="O48814"/>
    </source>
</evidence>
<evidence type="ECO:0000255" key="2">
    <source>
        <dbReference type="PROSITE-ProRule" id="PRU00159"/>
    </source>
</evidence>
<evidence type="ECO:0000255" key="3">
    <source>
        <dbReference type="PROSITE-ProRule" id="PRU10027"/>
    </source>
</evidence>
<proteinExistence type="inferred from homology"/>
<sequence>MFAGIFLRMGAALRSMYVNSKYEEVREEWEEDYSPQRFSYKALYKATKGFKESELFGTEANGTVYKGKLSSNAQIAVKRVSLDAEQDTKHLVSQIVGIGKLRHKNLVQLLGYCRRKGELLLVYDYMPYGNLDDFLFNEERPNLSWSQRFHIIKGVASALLYLHEQIVLHRDVKAANVLLDEDLNGRLDYGLARFGTNRNPMLGSVGYVAPELIITGMPTTKADVYSFGALLLEFACGRMFIEYPGKPEEFNLISWVCQCWKRGNLVGARDARLEGDYVCKEIEMVLKLGLLCAQYNPEDRPSMSQVVNYLEGNDVLPEMPPDTPGISIPTPYHEVLA</sequence>
<gene>
    <name type="primary">LECRKS3</name>
    <name type="ordered locus">At3g46760</name>
    <name type="ORF">T6H20.210</name>
</gene>
<dbReference type="EC" id="2.7.11.1"/>
<dbReference type="EMBL" id="AL096859">
    <property type="protein sequence ID" value="CAB51189.1"/>
    <property type="molecule type" value="Genomic_DNA"/>
</dbReference>
<dbReference type="EMBL" id="CP002686">
    <property type="protein sequence ID" value="AEE78201.1"/>
    <property type="molecule type" value="Genomic_DNA"/>
</dbReference>
<dbReference type="PIR" id="T12973">
    <property type="entry name" value="T12973"/>
</dbReference>
<dbReference type="RefSeq" id="NP_190260.1">
    <property type="nucleotide sequence ID" value="NM_114543.2"/>
</dbReference>
<dbReference type="SMR" id="Q9STF0"/>
<dbReference type="STRING" id="3702.Q9STF0"/>
<dbReference type="PaxDb" id="3702-AT3G46760.1"/>
<dbReference type="EnsemblPlants" id="AT3G46760.1">
    <property type="protein sequence ID" value="AT3G46760.1"/>
    <property type="gene ID" value="AT3G46760"/>
</dbReference>
<dbReference type="GeneID" id="823829"/>
<dbReference type="Gramene" id="AT3G46760.1">
    <property type="protein sequence ID" value="AT3G46760.1"/>
    <property type="gene ID" value="AT3G46760"/>
</dbReference>
<dbReference type="KEGG" id="ath:AT3G46760"/>
<dbReference type="Araport" id="AT3G46760"/>
<dbReference type="TAIR" id="AT3G46760">
    <property type="gene designation" value="LECRK-S.3"/>
</dbReference>
<dbReference type="eggNOG" id="KOG1187">
    <property type="taxonomic scope" value="Eukaryota"/>
</dbReference>
<dbReference type="HOGENOM" id="CLU_000288_21_4_1"/>
<dbReference type="InParanoid" id="Q9STF0"/>
<dbReference type="OMA" id="CKEIEMV"/>
<dbReference type="PhylomeDB" id="Q9STF0"/>
<dbReference type="PRO" id="PR:Q9STF0"/>
<dbReference type="Proteomes" id="UP000006548">
    <property type="component" value="Chromosome 3"/>
</dbReference>
<dbReference type="ExpressionAtlas" id="Q9STF0">
    <property type="expression patterns" value="baseline and differential"/>
</dbReference>
<dbReference type="GO" id="GO:0005524">
    <property type="term" value="F:ATP binding"/>
    <property type="evidence" value="ECO:0007669"/>
    <property type="project" value="UniProtKB-KW"/>
</dbReference>
<dbReference type="GO" id="GO:0106310">
    <property type="term" value="F:protein serine kinase activity"/>
    <property type="evidence" value="ECO:0007669"/>
    <property type="project" value="RHEA"/>
</dbReference>
<dbReference type="GO" id="GO:0004674">
    <property type="term" value="F:protein serine/threonine kinase activity"/>
    <property type="evidence" value="ECO:0007669"/>
    <property type="project" value="UniProtKB-KW"/>
</dbReference>
<dbReference type="GO" id="GO:0051707">
    <property type="term" value="P:response to other organism"/>
    <property type="evidence" value="ECO:0007669"/>
    <property type="project" value="UniProtKB-ARBA"/>
</dbReference>
<dbReference type="FunFam" id="1.10.510.10:FF:000108">
    <property type="entry name" value="L-type lectin-domain containing receptor kinase S.4"/>
    <property type="match status" value="1"/>
</dbReference>
<dbReference type="FunFam" id="3.30.200.20:FF:000178">
    <property type="entry name" value="serine/threonine-protein kinase PBS1-like"/>
    <property type="match status" value="1"/>
</dbReference>
<dbReference type="Gene3D" id="3.30.200.20">
    <property type="entry name" value="Phosphorylase Kinase, domain 1"/>
    <property type="match status" value="1"/>
</dbReference>
<dbReference type="Gene3D" id="1.10.510.10">
    <property type="entry name" value="Transferase(Phosphotransferase) domain 1"/>
    <property type="match status" value="1"/>
</dbReference>
<dbReference type="InterPro" id="IPR011009">
    <property type="entry name" value="Kinase-like_dom_sf"/>
</dbReference>
<dbReference type="InterPro" id="IPR050528">
    <property type="entry name" value="L-type_Lectin-RKs"/>
</dbReference>
<dbReference type="InterPro" id="IPR000719">
    <property type="entry name" value="Prot_kinase_dom"/>
</dbReference>
<dbReference type="InterPro" id="IPR001245">
    <property type="entry name" value="Ser-Thr/Tyr_kinase_cat_dom"/>
</dbReference>
<dbReference type="InterPro" id="IPR008271">
    <property type="entry name" value="Ser/Thr_kinase_AS"/>
</dbReference>
<dbReference type="PANTHER" id="PTHR27007">
    <property type="match status" value="1"/>
</dbReference>
<dbReference type="Pfam" id="PF07714">
    <property type="entry name" value="PK_Tyr_Ser-Thr"/>
    <property type="match status" value="1"/>
</dbReference>
<dbReference type="SMART" id="SM00220">
    <property type="entry name" value="S_TKc"/>
    <property type="match status" value="1"/>
</dbReference>
<dbReference type="SUPFAM" id="SSF56112">
    <property type="entry name" value="Protein kinase-like (PK-like)"/>
    <property type="match status" value="1"/>
</dbReference>
<dbReference type="PROSITE" id="PS50011">
    <property type="entry name" value="PROTEIN_KINASE_DOM"/>
    <property type="match status" value="1"/>
</dbReference>
<dbReference type="PROSITE" id="PS00108">
    <property type="entry name" value="PROTEIN_KINASE_ST"/>
    <property type="match status" value="1"/>
</dbReference>
<feature type="chain" id="PRO_0000403332" description="Receptor like protein kinase S.3">
    <location>
        <begin position="1"/>
        <end position="337"/>
    </location>
</feature>
<feature type="domain" description="Protein kinase" evidence="2">
    <location>
        <begin position="50"/>
        <end position="316"/>
    </location>
</feature>
<feature type="active site" description="Proton acceptor" evidence="2 3">
    <location>
        <position position="171"/>
    </location>
</feature>
<feature type="binding site" evidence="2">
    <location>
        <begin position="56"/>
        <end position="64"/>
    </location>
    <ligand>
        <name>ATP</name>
        <dbReference type="ChEBI" id="CHEBI:30616"/>
    </ligand>
</feature>
<feature type="binding site" evidence="2">
    <location>
        <position position="78"/>
    </location>
    <ligand>
        <name>ATP</name>
        <dbReference type="ChEBI" id="CHEBI:30616"/>
    </ligand>
</feature>
<feature type="modified residue" description="Phosphotyrosine" evidence="1">
    <location>
        <position position="123"/>
    </location>
</feature>
<reference key="1">
    <citation type="journal article" date="2000" name="Nature">
        <title>Sequence and analysis of chromosome 3 of the plant Arabidopsis thaliana.</title>
        <authorList>
            <person name="Salanoubat M."/>
            <person name="Lemcke K."/>
            <person name="Rieger M."/>
            <person name="Ansorge W."/>
            <person name="Unseld M."/>
            <person name="Fartmann B."/>
            <person name="Valle G."/>
            <person name="Bloecker H."/>
            <person name="Perez-Alonso M."/>
            <person name="Obermaier B."/>
            <person name="Delseny M."/>
            <person name="Boutry M."/>
            <person name="Grivell L.A."/>
            <person name="Mache R."/>
            <person name="Puigdomenech P."/>
            <person name="De Simone V."/>
            <person name="Choisne N."/>
            <person name="Artiguenave F."/>
            <person name="Robert C."/>
            <person name="Brottier P."/>
            <person name="Wincker P."/>
            <person name="Cattolico L."/>
            <person name="Weissenbach J."/>
            <person name="Saurin W."/>
            <person name="Quetier F."/>
            <person name="Schaefer M."/>
            <person name="Mueller-Auer S."/>
            <person name="Gabel C."/>
            <person name="Fuchs M."/>
            <person name="Benes V."/>
            <person name="Wurmbach E."/>
            <person name="Drzonek H."/>
            <person name="Erfle H."/>
            <person name="Jordan N."/>
            <person name="Bangert S."/>
            <person name="Wiedelmann R."/>
            <person name="Kranz H."/>
            <person name="Voss H."/>
            <person name="Holland R."/>
            <person name="Brandt P."/>
            <person name="Nyakatura G."/>
            <person name="Vezzi A."/>
            <person name="D'Angelo M."/>
            <person name="Pallavicini A."/>
            <person name="Toppo S."/>
            <person name="Simionati B."/>
            <person name="Conrad A."/>
            <person name="Hornischer K."/>
            <person name="Kauer G."/>
            <person name="Loehnert T.-H."/>
            <person name="Nordsiek G."/>
            <person name="Reichelt J."/>
            <person name="Scharfe M."/>
            <person name="Schoen O."/>
            <person name="Bargues M."/>
            <person name="Terol J."/>
            <person name="Climent J."/>
            <person name="Navarro P."/>
            <person name="Collado C."/>
            <person name="Perez-Perez A."/>
            <person name="Ottenwaelder B."/>
            <person name="Duchemin D."/>
            <person name="Cooke R."/>
            <person name="Laudie M."/>
            <person name="Berger-Llauro C."/>
            <person name="Purnelle B."/>
            <person name="Masuy D."/>
            <person name="de Haan M."/>
            <person name="Maarse A.C."/>
            <person name="Alcaraz J.-P."/>
            <person name="Cottet A."/>
            <person name="Casacuberta E."/>
            <person name="Monfort A."/>
            <person name="Argiriou A."/>
            <person name="Flores M."/>
            <person name="Liguori R."/>
            <person name="Vitale D."/>
            <person name="Mannhaupt G."/>
            <person name="Haase D."/>
            <person name="Schoof H."/>
            <person name="Rudd S."/>
            <person name="Zaccaria P."/>
            <person name="Mewes H.-W."/>
            <person name="Mayer K.F.X."/>
            <person name="Kaul S."/>
            <person name="Town C.D."/>
            <person name="Koo H.L."/>
            <person name="Tallon L.J."/>
            <person name="Jenkins J."/>
            <person name="Rooney T."/>
            <person name="Rizzo M."/>
            <person name="Walts A."/>
            <person name="Utterback T."/>
            <person name="Fujii C.Y."/>
            <person name="Shea T.P."/>
            <person name="Creasy T.H."/>
            <person name="Haas B."/>
            <person name="Maiti R."/>
            <person name="Wu D."/>
            <person name="Peterson J."/>
            <person name="Van Aken S."/>
            <person name="Pai G."/>
            <person name="Militscher J."/>
            <person name="Sellers P."/>
            <person name="Gill J.E."/>
            <person name="Feldblyum T.V."/>
            <person name="Preuss D."/>
            <person name="Lin X."/>
            <person name="Nierman W.C."/>
            <person name="Salzberg S.L."/>
            <person name="White O."/>
            <person name="Venter J.C."/>
            <person name="Fraser C.M."/>
            <person name="Kaneko T."/>
            <person name="Nakamura Y."/>
            <person name="Sato S."/>
            <person name="Kato T."/>
            <person name="Asamizu E."/>
            <person name="Sasamoto S."/>
            <person name="Kimura T."/>
            <person name="Idesawa K."/>
            <person name="Kawashima K."/>
            <person name="Kishida Y."/>
            <person name="Kiyokawa C."/>
            <person name="Kohara M."/>
            <person name="Matsumoto M."/>
            <person name="Matsuno A."/>
            <person name="Muraki A."/>
            <person name="Nakayama S."/>
            <person name="Nakazaki N."/>
            <person name="Shinpo S."/>
            <person name="Takeuchi C."/>
            <person name="Wada T."/>
            <person name="Watanabe A."/>
            <person name="Yamada M."/>
            <person name="Yasuda M."/>
            <person name="Tabata S."/>
        </authorList>
    </citation>
    <scope>NUCLEOTIDE SEQUENCE [LARGE SCALE GENOMIC DNA]</scope>
    <source>
        <strain>cv. Columbia</strain>
    </source>
</reference>
<reference key="2">
    <citation type="journal article" date="2017" name="Plant J.">
        <title>Araport11: a complete reannotation of the Arabidopsis thaliana reference genome.</title>
        <authorList>
            <person name="Cheng C.Y."/>
            <person name="Krishnakumar V."/>
            <person name="Chan A.P."/>
            <person name="Thibaud-Nissen F."/>
            <person name="Schobel S."/>
            <person name="Town C.D."/>
        </authorList>
    </citation>
    <scope>GENOME REANNOTATION</scope>
    <source>
        <strain>cv. Columbia</strain>
    </source>
</reference>
<reference key="3">
    <citation type="journal article" date="2009" name="J. Exp. Bot.">
        <title>Arabidopsis L-type lectin receptor kinases: phylogeny, classification, and expression profiles.</title>
        <authorList>
            <person name="Bouwmeester K."/>
            <person name="Govers F."/>
        </authorList>
    </citation>
    <scope>GENE FAMILY</scope>
    <scope>NOMENCLATURE</scope>
</reference>
<comment type="catalytic activity">
    <reaction>
        <text>L-seryl-[protein] + ATP = O-phospho-L-seryl-[protein] + ADP + H(+)</text>
        <dbReference type="Rhea" id="RHEA:17989"/>
        <dbReference type="Rhea" id="RHEA-COMP:9863"/>
        <dbReference type="Rhea" id="RHEA-COMP:11604"/>
        <dbReference type="ChEBI" id="CHEBI:15378"/>
        <dbReference type="ChEBI" id="CHEBI:29999"/>
        <dbReference type="ChEBI" id="CHEBI:30616"/>
        <dbReference type="ChEBI" id="CHEBI:83421"/>
        <dbReference type="ChEBI" id="CHEBI:456216"/>
        <dbReference type="EC" id="2.7.11.1"/>
    </reaction>
</comment>
<comment type="catalytic activity">
    <reaction>
        <text>L-threonyl-[protein] + ATP = O-phospho-L-threonyl-[protein] + ADP + H(+)</text>
        <dbReference type="Rhea" id="RHEA:46608"/>
        <dbReference type="Rhea" id="RHEA-COMP:11060"/>
        <dbReference type="Rhea" id="RHEA-COMP:11605"/>
        <dbReference type="ChEBI" id="CHEBI:15378"/>
        <dbReference type="ChEBI" id="CHEBI:30013"/>
        <dbReference type="ChEBI" id="CHEBI:30616"/>
        <dbReference type="ChEBI" id="CHEBI:61977"/>
        <dbReference type="ChEBI" id="CHEBI:456216"/>
        <dbReference type="EC" id="2.7.11.1"/>
    </reaction>
</comment>
<comment type="similarity">
    <text evidence="2">Belongs to the protein kinase superfamily. Ser/Thr protein kinase family.</text>
</comment>
<accession>Q9STF0</accession>
<keyword id="KW-0067">ATP-binding</keyword>
<keyword id="KW-0418">Kinase</keyword>
<keyword id="KW-0547">Nucleotide-binding</keyword>
<keyword id="KW-0597">Phosphoprotein</keyword>
<keyword id="KW-1185">Reference proteome</keyword>
<keyword id="KW-0723">Serine/threonine-protein kinase</keyword>
<keyword id="KW-0808">Transferase</keyword>
<name>LRKS3_ARATH</name>
<organism>
    <name type="scientific">Arabidopsis thaliana</name>
    <name type="common">Mouse-ear cress</name>
    <dbReference type="NCBI Taxonomy" id="3702"/>
    <lineage>
        <taxon>Eukaryota</taxon>
        <taxon>Viridiplantae</taxon>
        <taxon>Streptophyta</taxon>
        <taxon>Embryophyta</taxon>
        <taxon>Tracheophyta</taxon>
        <taxon>Spermatophyta</taxon>
        <taxon>Magnoliopsida</taxon>
        <taxon>eudicotyledons</taxon>
        <taxon>Gunneridae</taxon>
        <taxon>Pentapetalae</taxon>
        <taxon>rosids</taxon>
        <taxon>malvids</taxon>
        <taxon>Brassicales</taxon>
        <taxon>Brassicaceae</taxon>
        <taxon>Camelineae</taxon>
        <taxon>Arabidopsis</taxon>
    </lineage>
</organism>
<protein>
    <recommendedName>
        <fullName>Receptor like protein kinase S.3</fullName>
        <shortName>LecRK-S.3</shortName>
        <ecNumber>2.7.11.1</ecNumber>
    </recommendedName>
</protein>